<reference key="1">
    <citation type="journal article" date="1996" name="Mol. Cell. Biol.">
        <title>A novel repressor, par-4, modulates transcription and growth suppression functions of the Wilms' tumor suppressor WT1.</title>
        <authorList>
            <person name="Johnstone R.W."/>
            <person name="See R.H."/>
            <person name="Sells S.F."/>
            <person name="Wang J."/>
            <person name="Muthukkumar S."/>
            <person name="Englert C."/>
            <person name="Haber D.A."/>
            <person name="Licht J.D."/>
            <person name="Sugrue S.P."/>
            <person name="Roberts T."/>
            <person name="Rangnekar V.M."/>
            <person name="Shi Y."/>
        </authorList>
    </citation>
    <scope>NUCLEOTIDE SEQUENCE [MRNA]</scope>
    <scope>SUBCELLULAR LOCATION</scope>
    <scope>TISSUE SPECIFICITY</scope>
    <scope>INTERACTION WITH WT1</scope>
</reference>
<reference key="2">
    <citation type="submission" date="2004-06" db="EMBL/GenBank/DDBJ databases">
        <title>Cloning of human full open reading frames in Gateway(TM) system entry vector (pDONR201).</title>
        <authorList>
            <person name="Ebert L."/>
            <person name="Schick M."/>
            <person name="Neubert P."/>
            <person name="Schatten R."/>
            <person name="Henze S."/>
            <person name="Korn B."/>
        </authorList>
    </citation>
    <scope>NUCLEOTIDE SEQUENCE [LARGE SCALE MRNA]</scope>
    <scope>VARIANT ARG-78</scope>
</reference>
<reference key="3">
    <citation type="submission" date="2003-05" db="EMBL/GenBank/DDBJ databases">
        <authorList>
            <consortium name="NIEHS SNPs program"/>
        </authorList>
    </citation>
    <scope>NUCLEOTIDE SEQUENCE [GENOMIC DNA]</scope>
    <scope>VARIANTS LEU-42; ARG-78; ALA-137 AND ALA-202</scope>
</reference>
<reference key="4">
    <citation type="journal article" date="2004" name="Genome Res.">
        <title>The status, quality, and expansion of the NIH full-length cDNA project: the Mammalian Gene Collection (MGC).</title>
        <authorList>
            <consortium name="The MGC Project Team"/>
        </authorList>
    </citation>
    <scope>NUCLEOTIDE SEQUENCE [LARGE SCALE MRNA]</scope>
    <source>
        <tissue>Kidney</tissue>
    </source>
</reference>
<reference key="5">
    <citation type="journal article" date="2002" name="Gene">
        <title>Structural and functional characterization of the upstream regulatory region of the human gene encoding prostate apoptosis response factor-4.</title>
        <authorList>
            <person name="Hsu S.-C."/>
            <person name="Kirschenbaum F."/>
            <person name="Miller J."/>
            <person name="Cordell B."/>
            <person name="McCarthy J.V."/>
        </authorList>
    </citation>
    <scope>NUCLEOTIDE SEQUENCE [GENOMIC DNA] OF 1-64</scope>
    <source>
        <tissue>Blood</tissue>
    </source>
</reference>
<reference key="6">
    <citation type="journal article" date="2001" name="Cancer Res.">
        <title>Par-4 drives trafficking and activation of Fas and Fasl to induce prostate cancer cell apoptosis and tumor regression.</title>
        <authorList>
            <person name="Chakraborty M."/>
            <person name="Qiu S.G."/>
            <person name="Vasudevan K.M."/>
            <person name="Rangnekar V.M."/>
        </authorList>
    </citation>
    <scope>FUNCTION IN APOPTOSIS AND TUMOR REGRESSION</scope>
</reference>
<reference key="7">
    <citation type="journal article" date="2002" name="FEBS Lett.">
        <title>p62 forms a ternary complex with PKCzeta and PAR-4 and antagonizes PAR-4-induced PKCzeta inhibition.</title>
        <authorList>
            <person name="Chang S."/>
            <person name="Kim J.H."/>
            <person name="Shin J."/>
        </authorList>
    </citation>
    <scope>INTERACTION WITH SQSTM1 AND PRKCZ</scope>
</reference>
<reference key="8">
    <citation type="journal article" date="2003" name="Oncogene">
        <title>THAP1 is a nuclear proapoptotic factor that links prostate-apoptosis-response-4 (Par-4) to PML nuclear bodies.</title>
        <authorList>
            <person name="Roussigne M."/>
            <person name="Cayrol C."/>
            <person name="Clouaire T."/>
            <person name="Amalric F."/>
            <person name="Girard J.-P."/>
        </authorList>
    </citation>
    <scope>SUBCELLULAR LOCATION</scope>
    <scope>INTERACTION WITH THAP1</scope>
</reference>
<reference key="9">
    <citation type="journal article" date="2004" name="J. Biol. Chem.">
        <title>AATF inhibits aberrant production of amyloid beta peptide 1-42 by interacting directly with Par-4.</title>
        <authorList>
            <person name="Guo Q."/>
            <person name="Xie J."/>
        </authorList>
    </citation>
    <scope>INTERACTION WITH AATF</scope>
</reference>
<reference key="10">
    <citation type="journal article" date="2005" name="J. Biol. Chem.">
        <title>PAR-4 is involved in regulation of beta-secretase cleavage of the Alzheimer amyloid precursor protein.</title>
        <authorList>
            <person name="Xie J."/>
            <person name="Guo Q."/>
        </authorList>
    </citation>
    <scope>INTERACTION WITH BACE1</scope>
</reference>
<reference key="11">
    <citation type="journal article" date="2006" name="Mol. Cell">
        <title>Structural basis for protein recognition by B30.2/SPRY domains.</title>
        <authorList>
            <person name="Woo J.S."/>
            <person name="Suh H.Y."/>
            <person name="Park S.Y."/>
            <person name="Oh B.H."/>
        </authorList>
    </citation>
    <scope>INTERACTION WITH SPSB1 AND SPSB2</scope>
    <scope>MUTAGENESIS OF ASN-72</scope>
</reference>
<reference key="12">
    <citation type="journal article" date="2003" name="Exp. Cell Res.">
        <title>Apoptosis by Par-4 in cancer and neurodegenerative diseases.</title>
        <authorList>
            <person name="El-Guendy N."/>
            <person name="Rangnekar V.M."/>
        </authorList>
    </citation>
    <scope>REVIEW ON FUNCTION IN APOPTOSIS AND NEURODEGENERATIVE DISEASES</scope>
</reference>
<reference key="13">
    <citation type="journal article" date="2004" name="J. Cell. Biochem.">
        <title>Par-4 inducible apoptosis in prostate cancer cells.</title>
        <authorList>
            <person name="Gurumurthy S."/>
            <person name="Rangnekar V.M."/>
        </authorList>
    </citation>
    <scope>REVIEW</scope>
</reference>
<reference key="14">
    <citation type="journal article" date="2008" name="Proc. Natl. Acad. Sci. U.S.A.">
        <title>A quantitative atlas of mitotic phosphorylation.</title>
        <authorList>
            <person name="Dephoure N."/>
            <person name="Zhou C."/>
            <person name="Villen J."/>
            <person name="Beausoleil S.A."/>
            <person name="Bakalarski C.E."/>
            <person name="Elledge S.J."/>
            <person name="Gygi S.P."/>
        </authorList>
    </citation>
    <scope>IDENTIFICATION BY MASS SPECTROMETRY [LARGE SCALE ANALYSIS]</scope>
    <source>
        <tissue>Cervix carcinoma</tissue>
    </source>
</reference>
<reference key="15">
    <citation type="journal article" date="2009" name="Anal. Chem.">
        <title>Lys-N and trypsin cover complementary parts of the phosphoproteome in a refined SCX-based approach.</title>
        <authorList>
            <person name="Gauci S."/>
            <person name="Helbig A.O."/>
            <person name="Slijper M."/>
            <person name="Krijgsveld J."/>
            <person name="Heck A.J."/>
            <person name="Mohammed S."/>
        </authorList>
    </citation>
    <scope>IDENTIFICATION BY MASS SPECTROMETRY [LARGE SCALE ANALYSIS]</scope>
</reference>
<reference key="16">
    <citation type="journal article" date="2010" name="Sci. Signal.">
        <title>Quantitative phosphoproteomics reveals widespread full phosphorylation site occupancy during mitosis.</title>
        <authorList>
            <person name="Olsen J.V."/>
            <person name="Vermeulen M."/>
            <person name="Santamaria A."/>
            <person name="Kumar C."/>
            <person name="Miller M.L."/>
            <person name="Jensen L.J."/>
            <person name="Gnad F."/>
            <person name="Cox J."/>
            <person name="Jensen T.S."/>
            <person name="Nigg E.A."/>
            <person name="Brunak S."/>
            <person name="Mann M."/>
        </authorList>
    </citation>
    <scope>IDENTIFICATION BY MASS SPECTROMETRY [LARGE SCALE ANALYSIS]</scope>
    <source>
        <tissue>Cervix carcinoma</tissue>
    </source>
</reference>
<reference key="17">
    <citation type="journal article" date="2011" name="BMC Syst. Biol.">
        <title>Initial characterization of the human central proteome.</title>
        <authorList>
            <person name="Burkard T.R."/>
            <person name="Planyavsky M."/>
            <person name="Kaupe I."/>
            <person name="Breitwieser F.P."/>
            <person name="Buerckstuemmer T."/>
            <person name="Bennett K.L."/>
            <person name="Superti-Furga G."/>
            <person name="Colinge J."/>
        </authorList>
    </citation>
    <scope>IDENTIFICATION BY MASS SPECTROMETRY [LARGE SCALE ANALYSIS]</scope>
</reference>
<reference key="18">
    <citation type="journal article" date="2013" name="J. Proteome Res.">
        <title>Toward a comprehensive characterization of a human cancer cell phosphoproteome.</title>
        <authorList>
            <person name="Zhou H."/>
            <person name="Di Palma S."/>
            <person name="Preisinger C."/>
            <person name="Peng M."/>
            <person name="Polat A.N."/>
            <person name="Heck A.J."/>
            <person name="Mohammed S."/>
        </authorList>
    </citation>
    <scope>PHOSPHORYLATION [LARGE SCALE ANALYSIS] AT SER-231</scope>
    <scope>IDENTIFICATION BY MASS SPECTROMETRY [LARGE SCALE ANALYSIS]</scope>
    <source>
        <tissue>Cervix carcinoma</tissue>
    </source>
</reference>
<reference key="19">
    <citation type="journal article" date="2014" name="J. Proteomics">
        <title>An enzyme assisted RP-RPLC approach for in-depth analysis of human liver phosphoproteome.</title>
        <authorList>
            <person name="Bian Y."/>
            <person name="Song C."/>
            <person name="Cheng K."/>
            <person name="Dong M."/>
            <person name="Wang F."/>
            <person name="Huang J."/>
            <person name="Sun D."/>
            <person name="Wang L."/>
            <person name="Ye M."/>
            <person name="Zou H."/>
        </authorList>
    </citation>
    <scope>PHOSPHORYLATION [LARGE SCALE ANALYSIS] AT SER-108</scope>
    <scope>IDENTIFICATION BY MASS SPECTROMETRY [LARGE SCALE ANALYSIS]</scope>
    <source>
        <tissue>Liver</tissue>
    </source>
</reference>
<reference evidence="17" key="20">
    <citation type="journal article" date="2010" name="J. Mol. Biol.">
        <title>Structural basis for Par-4 recognition by the SPRY domain- and SOCS box-containing proteins SPSB1, SPSB2, and SPSB4.</title>
        <authorList>
            <person name="Filippakopoulos P."/>
            <person name="Low A."/>
            <person name="Sharpe T.D."/>
            <person name="Uppenberg J."/>
            <person name="Yao S."/>
            <person name="Kuang Z."/>
            <person name="Savitsky P."/>
            <person name="Lewis R.S."/>
            <person name="Nicholson S.E."/>
            <person name="Norton R.S."/>
            <person name="Bullock A.N."/>
        </authorList>
    </citation>
    <scope>X-RAY CRYSTALLOGRAPHY (1.79 ANGSTROMS) OF 67-74 IN COMPLEX WITH SPSB1</scope>
    <scope>INTERACTION WITH SPSB1; SPSB2 AND SPSB4</scope>
    <scope>MUTAGENESIS OF ALA-66; GLU-68; LEU-69; ASN-71 AND ASN-72</scope>
    <scope>MOTIF</scope>
</reference>
<sequence length="340" mass="36568">MATGGYRTSSGLGGSTTDFLEEWKAKREKMRAKQNPPGPAPPGGGSSDAAGKPPAGALGTPAAAAANELNNNLPGGAPAAPAVPGPGGVNCAVGSAMLTRAAPGPRRSEDEPPAASASAAPPPQRDEEEPDGVPEKGKSSGPSARKGKGQIEKRKLREKRRSTGVVNIPAAECLDEYEDDEAGQKERKREDAITQQNTIQNEAVNLLDPGSSYLLQEPPRTVSGRYKSTTSVSEEDVSSRYSRTDRSGFPRYNRDANVSGTLVSSSTLEKKIEDLEKEVVRERQENLRLVRLMQDKEEMIGKLKEEIDLLNRDLDDIEDENEQLKQENKTLLKVVGQLTR</sequence>
<protein>
    <recommendedName>
        <fullName>PRKC apoptosis WT1 regulator protein</fullName>
    </recommendedName>
    <alternativeName>
        <fullName>Prostate apoptosis response 4 protein</fullName>
        <shortName>Par-4</shortName>
    </alternativeName>
</protein>
<proteinExistence type="evidence at protein level"/>
<keyword id="KW-0002">3D-structure</keyword>
<keyword id="KW-0053">Apoptosis</keyword>
<keyword id="KW-0175">Coiled coil</keyword>
<keyword id="KW-0963">Cytoplasm</keyword>
<keyword id="KW-0539">Nucleus</keyword>
<keyword id="KW-0597">Phosphoprotein</keyword>
<keyword id="KW-1267">Proteomics identification</keyword>
<keyword id="KW-1185">Reference proteome</keyword>
<keyword id="KW-0804">Transcription</keyword>
<keyword id="KW-0805">Transcription regulation</keyword>
<name>PAWR_HUMAN</name>
<organism>
    <name type="scientific">Homo sapiens</name>
    <name type="common">Human</name>
    <dbReference type="NCBI Taxonomy" id="9606"/>
    <lineage>
        <taxon>Eukaryota</taxon>
        <taxon>Metazoa</taxon>
        <taxon>Chordata</taxon>
        <taxon>Craniata</taxon>
        <taxon>Vertebrata</taxon>
        <taxon>Euteleostomi</taxon>
        <taxon>Mammalia</taxon>
        <taxon>Eutheria</taxon>
        <taxon>Euarchontoglires</taxon>
        <taxon>Primates</taxon>
        <taxon>Haplorrhini</taxon>
        <taxon>Catarrhini</taxon>
        <taxon>Hominidae</taxon>
        <taxon>Homo</taxon>
    </lineage>
</organism>
<accession>Q96IZ0</accession>
<accession>O75796</accession>
<accession>Q6FHY9</accession>
<accession>Q8N700</accession>
<comment type="function">
    <text evidence="6">Pro-apoptotic protein capable of selectively inducing apoptosis in cancer cells, sensitizing the cells to diverse apoptotic stimuli and causing regression of tumors in animal models. Induces apoptosis in certain cancer cells by activation of the Fas prodeath pathway and coparallel inhibition of NF-kappa-B transcriptional activity. Inhibits the transcriptional activation and augments the transcriptional repression mediated by WT1. Down-regulates the anti-apoptotic protein BCL2 via its interaction with WT1. Also seems to be a transcriptional repressor by itself. May be directly involved in regulating the amyloid precursor protein (APP) cleavage activity of BACE1.</text>
</comment>
<comment type="subunit">
    <text evidence="2 3 7 8 9 10 11 12 13">Homooligomer. Interacts (via the C-terminal region) with WT1 (PubMed:8943350). Interacts with THAP1 (PubMed:12717420). Interacts with AATF (PubMed:14627703). Interacts with BACE1 (PubMed:15671026). Interacts with SPSB1 (via B30.2/SPRY domain); this interaction is direct and occurs in association with the Elongin BC complex (PubMed:17189197, PubMed:20561531). Interacts with SPSB2 (via B30.2/SPRY domain); this interaction occurs in association with the Elongin BC complex (PubMed:17189197, PubMed:20561531). Interacts with SPSB4 (via B30.2/SPRY domain) (PubMed:20561531); this interaction occurs in association with the Elongin BC complex (PubMed:20561531). Component of a ternary complex composed of SQSTM1 and PRKCZ (PubMed:11755531). Interacts with actin (By similarity).</text>
</comment>
<comment type="interaction">
    <interactant intactId="EBI-595869">
        <id>Q96IZ0</id>
    </interactant>
    <interactant intactId="EBI-448924">
        <id>Q01094</id>
        <label>E2F1</label>
    </interactant>
    <organismsDiffer>false</organismsDiffer>
    <experiments>2</experiments>
</comment>
<comment type="interaction">
    <interactant intactId="EBI-595869">
        <id>Q96IZ0</id>
    </interactant>
    <interactant intactId="EBI-354921">
        <id>P11021</id>
        <label>HSPA5</label>
    </interactant>
    <organismsDiffer>false</organismsDiffer>
    <experiments>8</experiments>
</comment>
<comment type="interaction">
    <interactant intactId="EBI-595869">
        <id>Q96IZ0</id>
    </interactant>
    <interactant intactId="EBI-2659201">
        <id>Q96BD6</id>
        <label>SPSB1</label>
    </interactant>
    <organismsDiffer>false</organismsDiffer>
    <experiments>2</experiments>
</comment>
<comment type="interaction">
    <interactant intactId="EBI-595869">
        <id>Q96IZ0</id>
    </interactant>
    <interactant intactId="EBI-2323209">
        <id>Q99619</id>
        <label>SPSB2</label>
    </interactant>
    <organismsDiffer>false</organismsDiffer>
    <experiments>2</experiments>
</comment>
<comment type="interaction">
    <interactant intactId="EBI-595869">
        <id>Q96IZ0</id>
    </interactant>
    <interactant intactId="EBI-2323233">
        <id>Q96A44</id>
        <label>SPSB4</label>
    </interactant>
    <organismsDiffer>false</organismsDiffer>
    <experiments>2</experiments>
</comment>
<comment type="interaction">
    <interactant intactId="EBI-595869">
        <id>Q96IZ0</id>
    </interactant>
    <interactant intactId="EBI-353844">
        <id>P08670</id>
        <label>VIM</label>
    </interactant>
    <organismsDiffer>false</organismsDiffer>
    <experiments>2</experiments>
</comment>
<comment type="interaction">
    <interactant intactId="EBI-595869">
        <id>Q96IZ0</id>
    </interactant>
    <interactant intactId="EBI-8821912">
        <id>Q9D5L7</id>
        <label>Spsb1</label>
    </interactant>
    <organismsDiffer>true</organismsDiffer>
    <experiments>2</experiments>
</comment>
<comment type="interaction">
    <interactant intactId="EBI-595869">
        <id>Q96IZ0</id>
    </interactant>
    <interactant intactId="EBI-8820410">
        <id>O88838</id>
        <label>Spsb2</label>
    </interactant>
    <organismsDiffer>true</organismsDiffer>
    <experiments>6</experiments>
</comment>
<comment type="interaction">
    <interactant intactId="EBI-595869">
        <id>Q96IZ0</id>
    </interactant>
    <interactant intactId="EBI-8821982">
        <id>Q8R5B6</id>
        <label>Spsb4</label>
    </interactant>
    <organismsDiffer>true</organismsDiffer>
    <experiments>3</experiments>
</comment>
<comment type="subcellular location">
    <subcellularLocation>
        <location>Cytoplasm</location>
    </subcellularLocation>
    <subcellularLocation>
        <location>Nucleus</location>
    </subcellularLocation>
    <text evidence="1">Mainly cytoplasmic in absence of apoptosis signal and in normal cells. Nuclear in most cancer cell lines. Nuclear entry seems to be essential but not sufficient for apoptosis (By similarity). Nuclear localization includes nucleoplasm and PML nuclear bodies.</text>
</comment>
<comment type="tissue specificity">
    <text evidence="13">Widely expressed. Expression is elevated in various neurodegenerative diseases such as amyotrophic lateral sclerosis, Alzheimer, Parkinson and Huntington diseases and stroke. Down-regulated in several cancers.</text>
</comment>
<comment type="induction">
    <text>By apoptosis.</text>
</comment>
<comment type="domain">
    <text evidence="1">The leucine-zipper domain is not essential for apoptosis, but is required for sensitization of cells to exogenous apoptotic insults and for interaction with its partners.</text>
</comment>
<comment type="domain">
    <text evidence="1">The SAC domain is a death-inducing domain selective for apoptosis induction in cancer cells. This domain is essential for nuclear entry, Fas activation, inhibition of NF-kappa-B activity and induction of apoptosis in cancer cells (By similarity).</text>
</comment>
<comment type="domain">
    <text evidence="12">The B30.2/SPRY domain-binding motif mediates recognition by proteins containing a B30.2/SPRY domain.</text>
</comment>
<comment type="PTM">
    <text evidence="1">Preferentially phosphorylated at the Thr-163 by PKC in cancer cells.</text>
</comment>
<comment type="online information" name="Atlas of Genetics and Cytogenetics in Oncology and Haematology">
    <link uri="https://atlasgeneticsoncology.org/gene/41641/PAWR"/>
</comment>
<gene>
    <name type="primary">PAWR</name>
    <name type="synonym">PAR4</name>
</gene>
<feature type="chain" id="PRO_0000058236" description="PRKC apoptosis WT1 regulator protein">
    <location>
        <begin position="1"/>
        <end position="340"/>
    </location>
</feature>
<feature type="region of interest" description="Disordered" evidence="5">
    <location>
        <begin position="1"/>
        <end position="253"/>
    </location>
</feature>
<feature type="region of interest" description="Selective for apoptosis induction in cancer cells (SAC)">
    <location>
        <begin position="145"/>
        <end position="203"/>
    </location>
</feature>
<feature type="region of interest" description="Leucine-zipper">
    <location>
        <begin position="300"/>
        <end position="340"/>
    </location>
</feature>
<feature type="coiled-coil region" evidence="4">
    <location>
        <begin position="186"/>
        <end position="206"/>
    </location>
</feature>
<feature type="short sequence motif" description="B30.2/SPRY domain-binding motif" evidence="12">
    <location>
        <begin position="68"/>
        <end position="72"/>
    </location>
</feature>
<feature type="short sequence motif" description="Nuclear localization signal" evidence="1">
    <location>
        <begin position="145"/>
        <end position="161"/>
    </location>
</feature>
<feature type="compositionally biased region" description="Polar residues" evidence="5">
    <location>
        <begin position="1"/>
        <end position="18"/>
    </location>
</feature>
<feature type="compositionally biased region" description="Low complexity" evidence="5">
    <location>
        <begin position="47"/>
        <end position="82"/>
    </location>
</feature>
<feature type="compositionally biased region" description="Basic and acidic residues" evidence="5">
    <location>
        <begin position="182"/>
        <end position="192"/>
    </location>
</feature>
<feature type="compositionally biased region" description="Polar residues" evidence="5">
    <location>
        <begin position="193"/>
        <end position="203"/>
    </location>
</feature>
<feature type="compositionally biased region" description="Basic and acidic residues" evidence="5">
    <location>
        <begin position="242"/>
        <end position="253"/>
    </location>
</feature>
<feature type="modified residue" description="Phosphoserine" evidence="19">
    <location>
        <position position="108"/>
    </location>
</feature>
<feature type="modified residue" description="Phosphothreonine; by PKA" evidence="2">
    <location>
        <position position="163"/>
    </location>
</feature>
<feature type="modified residue" description="Phosphoserine" evidence="18">
    <location>
        <position position="231"/>
    </location>
</feature>
<feature type="sequence variant" id="VAR_022465" description="In dbSNP:rs8176804." evidence="15">
    <original>P</original>
    <variation>L</variation>
    <location>
        <position position="42"/>
    </location>
</feature>
<feature type="sequence variant" id="VAR_022466" description="In dbSNP:rs8176805." evidence="14 15">
    <original>P</original>
    <variation>R</variation>
    <location>
        <position position="78"/>
    </location>
</feature>
<feature type="sequence variant" id="VAR_022467" description="In dbSNP:rs8176806." evidence="15">
    <original>G</original>
    <variation>A</variation>
    <location>
        <position position="137"/>
    </location>
</feature>
<feature type="sequence variant" id="VAR_022468" description="In dbSNP:rs8176870." evidence="15">
    <original>E</original>
    <variation>A</variation>
    <location>
        <position position="202"/>
    </location>
</feature>
<feature type="mutagenesis site" description="No loss of interaction with SPSB1, SPSB2 and SPSB4." evidence="12">
    <original>A</original>
    <variation>D</variation>
    <location>
        <position position="66"/>
    </location>
</feature>
<feature type="mutagenesis site" description="Increased interaction with SPSB2. Only slightly increased interaction with SPSB4. Increased interaction with SPSB1, SPSB2 and SPSB4; when associated with A-69." evidence="12">
    <original>E</original>
    <variation>D</variation>
    <location>
        <position position="68"/>
    </location>
</feature>
<feature type="mutagenesis site" description="Only slighlty increased interaction with SPSB2. Only slightly increased interaction with SPSB4. Increased interaction with SPSB1, SPSB2 and SPSB4; when associated with A-68." evidence="12">
    <original>L</original>
    <variation>I</variation>
    <location>
        <position position="69"/>
    </location>
</feature>
<feature type="mutagenesis site" description="Loss of interaction with SPSB1, SPSB2 and SPSB4." evidence="12">
    <original>N</original>
    <variation>A</variation>
    <location>
        <position position="71"/>
    </location>
</feature>
<feature type="mutagenesis site" description="Loss of interaction with SPSB1-Elongin BC complex and SPSB2 and SPSB4." evidence="11 12">
    <original>N</original>
    <variation>A</variation>
    <location>
        <position position="72"/>
    </location>
</feature>
<feature type="sequence conflict" description="In Ref. 1; AAC24947." evidence="16" ref="1">
    <original>AP</original>
    <variation>PPAR</variation>
    <location>
        <begin position="102"/>
        <end position="103"/>
    </location>
</feature>
<feature type="sequence conflict" description="In Ref. 2; CAG38786." evidence="16" ref="2">
    <original>I</original>
    <variation>M</variation>
    <location>
        <position position="199"/>
    </location>
</feature>
<feature type="sequence conflict" description="In Ref. 1; AAC24947." evidence="16" ref="1">
    <original>R</original>
    <variation>T</variation>
    <location>
        <position position="281"/>
    </location>
</feature>
<evidence type="ECO:0000250" key="1"/>
<evidence type="ECO:0000250" key="2">
    <source>
        <dbReference type="UniProtKB" id="Q62627"/>
    </source>
</evidence>
<evidence type="ECO:0000250" key="3">
    <source>
        <dbReference type="UniProtKB" id="Q925B0"/>
    </source>
</evidence>
<evidence type="ECO:0000255" key="4"/>
<evidence type="ECO:0000256" key="5">
    <source>
        <dbReference type="SAM" id="MobiDB-lite"/>
    </source>
</evidence>
<evidence type="ECO:0000269" key="6">
    <source>
    </source>
</evidence>
<evidence type="ECO:0000269" key="7">
    <source>
    </source>
</evidence>
<evidence type="ECO:0000269" key="8">
    <source>
    </source>
</evidence>
<evidence type="ECO:0000269" key="9">
    <source>
    </source>
</evidence>
<evidence type="ECO:0000269" key="10">
    <source>
    </source>
</evidence>
<evidence type="ECO:0000269" key="11">
    <source>
    </source>
</evidence>
<evidence type="ECO:0000269" key="12">
    <source>
    </source>
</evidence>
<evidence type="ECO:0000269" key="13">
    <source>
    </source>
</evidence>
<evidence type="ECO:0000269" key="14">
    <source ref="2"/>
</evidence>
<evidence type="ECO:0000269" key="15">
    <source ref="3"/>
</evidence>
<evidence type="ECO:0000305" key="16"/>
<evidence type="ECO:0007744" key="17">
    <source>
        <dbReference type="PDB" id="2JK9"/>
    </source>
</evidence>
<evidence type="ECO:0007744" key="18">
    <source>
    </source>
</evidence>
<evidence type="ECO:0007744" key="19">
    <source>
    </source>
</evidence>
<dbReference type="EMBL" id="U63809">
    <property type="protein sequence ID" value="AAC24947.1"/>
    <property type="molecule type" value="mRNA"/>
</dbReference>
<dbReference type="EMBL" id="CR536549">
    <property type="protein sequence ID" value="CAG38786.1"/>
    <property type="molecule type" value="mRNA"/>
</dbReference>
<dbReference type="EMBL" id="AY300794">
    <property type="protein sequence ID" value="AAP43693.1"/>
    <property type="molecule type" value="Genomic_DNA"/>
</dbReference>
<dbReference type="EMBL" id="BC007018">
    <property type="protein sequence ID" value="AAH07018.1"/>
    <property type="molecule type" value="mRNA"/>
</dbReference>
<dbReference type="EMBL" id="AF503628">
    <property type="protein sequence ID" value="AAM27453.1"/>
    <property type="molecule type" value="Genomic_DNA"/>
</dbReference>
<dbReference type="CCDS" id="CCDS31863.1"/>
<dbReference type="RefSeq" id="NP_001341661.1">
    <property type="nucleotide sequence ID" value="NM_001354732.2"/>
</dbReference>
<dbReference type="RefSeq" id="NP_002574.2">
    <property type="nucleotide sequence ID" value="NM_002583.4"/>
</dbReference>
<dbReference type="RefSeq" id="XP_006719498.1">
    <property type="nucleotide sequence ID" value="XM_006719435.2"/>
</dbReference>
<dbReference type="RefSeq" id="XP_016874866.1">
    <property type="nucleotide sequence ID" value="XM_017019377.1"/>
</dbReference>
<dbReference type="RefSeq" id="XP_047284872.1">
    <property type="nucleotide sequence ID" value="XM_047428916.1"/>
</dbReference>
<dbReference type="RefSeq" id="XP_054228126.1">
    <property type="nucleotide sequence ID" value="XM_054372151.1"/>
</dbReference>
<dbReference type="PDB" id="2JK9">
    <property type="method" value="X-ray"/>
    <property type="resolution" value="1.79 A"/>
    <property type="chains" value="B=67-81"/>
</dbReference>
<dbReference type="PDBsum" id="2JK9"/>
<dbReference type="SMR" id="Q96IZ0"/>
<dbReference type="BioGRID" id="111108">
    <property type="interactions" value="135"/>
</dbReference>
<dbReference type="CORUM" id="Q96IZ0"/>
<dbReference type="DIP" id="DIP-29003N"/>
<dbReference type="ELM" id="Q96IZ0"/>
<dbReference type="FunCoup" id="Q96IZ0">
    <property type="interactions" value="1301"/>
</dbReference>
<dbReference type="IntAct" id="Q96IZ0">
    <property type="interactions" value="35"/>
</dbReference>
<dbReference type="MINT" id="Q96IZ0"/>
<dbReference type="STRING" id="9606.ENSP00000328088"/>
<dbReference type="BindingDB" id="Q96IZ0"/>
<dbReference type="DrugBank" id="DB14942">
    <property type="generic name" value="BMS-986141"/>
</dbReference>
<dbReference type="GlyGen" id="Q96IZ0">
    <property type="glycosylation" value="5 sites, 1 O-linked glycan (5 sites)"/>
</dbReference>
<dbReference type="iPTMnet" id="Q96IZ0"/>
<dbReference type="PhosphoSitePlus" id="Q96IZ0"/>
<dbReference type="BioMuta" id="PAWR"/>
<dbReference type="DMDM" id="66773935"/>
<dbReference type="jPOST" id="Q96IZ0"/>
<dbReference type="MassIVE" id="Q96IZ0"/>
<dbReference type="PaxDb" id="9606-ENSP00000328088"/>
<dbReference type="PeptideAtlas" id="Q96IZ0"/>
<dbReference type="ProteomicsDB" id="76870"/>
<dbReference type="Pumba" id="Q96IZ0"/>
<dbReference type="TopDownProteomics" id="Q96IZ0"/>
<dbReference type="Antibodypedia" id="1824">
    <property type="antibodies" value="388 antibodies from 40 providers"/>
</dbReference>
<dbReference type="DNASU" id="5074"/>
<dbReference type="Ensembl" id="ENST00000328827.9">
    <property type="protein sequence ID" value="ENSP00000328088.4"/>
    <property type="gene ID" value="ENSG00000177425.11"/>
</dbReference>
<dbReference type="GeneID" id="5074"/>
<dbReference type="KEGG" id="hsa:5074"/>
<dbReference type="MANE-Select" id="ENST00000328827.9">
    <property type="protein sequence ID" value="ENSP00000328088.4"/>
    <property type="RefSeq nucleotide sequence ID" value="NM_002583.4"/>
    <property type="RefSeq protein sequence ID" value="NP_002574.2"/>
</dbReference>
<dbReference type="UCSC" id="uc001syx.4">
    <property type="organism name" value="human"/>
</dbReference>
<dbReference type="AGR" id="HGNC:8614"/>
<dbReference type="CTD" id="5074"/>
<dbReference type="DisGeNET" id="5074"/>
<dbReference type="GeneCards" id="PAWR"/>
<dbReference type="HGNC" id="HGNC:8614">
    <property type="gene designation" value="PAWR"/>
</dbReference>
<dbReference type="HPA" id="ENSG00000177425">
    <property type="expression patterns" value="Low tissue specificity"/>
</dbReference>
<dbReference type="MIM" id="601936">
    <property type="type" value="gene"/>
</dbReference>
<dbReference type="neXtProt" id="NX_Q96IZ0"/>
<dbReference type="OpenTargets" id="ENSG00000177425"/>
<dbReference type="PharmGKB" id="PA32954"/>
<dbReference type="VEuPathDB" id="HostDB:ENSG00000177425"/>
<dbReference type="eggNOG" id="ENOG502QVUF">
    <property type="taxonomic scope" value="Eukaryota"/>
</dbReference>
<dbReference type="GeneTree" id="ENSGT00390000000406"/>
<dbReference type="HOGENOM" id="CLU_076619_0_0_1"/>
<dbReference type="InParanoid" id="Q96IZ0"/>
<dbReference type="OMA" id="NCIPLAR"/>
<dbReference type="OrthoDB" id="6286739at2759"/>
<dbReference type="PAN-GO" id="Q96IZ0">
    <property type="GO annotations" value="2 GO annotations based on evolutionary models"/>
</dbReference>
<dbReference type="PhylomeDB" id="Q96IZ0"/>
<dbReference type="TreeFam" id="TF332824"/>
<dbReference type="PathwayCommons" id="Q96IZ0"/>
<dbReference type="SignaLink" id="Q96IZ0"/>
<dbReference type="SIGNOR" id="Q96IZ0"/>
<dbReference type="BioGRID-ORCS" id="5074">
    <property type="hits" value="29 hits in 1161 CRISPR screens"/>
</dbReference>
<dbReference type="CD-CODE" id="DEE660B4">
    <property type="entry name" value="Stress granule"/>
</dbReference>
<dbReference type="ChiTaRS" id="PAWR">
    <property type="organism name" value="human"/>
</dbReference>
<dbReference type="EvolutionaryTrace" id="Q96IZ0"/>
<dbReference type="GeneWiki" id="PAWR"/>
<dbReference type="GenomeRNAi" id="5074"/>
<dbReference type="Pharos" id="Q96IZ0">
    <property type="development level" value="Tbio"/>
</dbReference>
<dbReference type="PRO" id="PR:Q96IZ0"/>
<dbReference type="Proteomes" id="UP000005640">
    <property type="component" value="Chromosome 12"/>
</dbReference>
<dbReference type="RNAct" id="Q96IZ0">
    <property type="molecule type" value="protein"/>
</dbReference>
<dbReference type="Bgee" id="ENSG00000177425">
    <property type="expression patterns" value="Expressed in germinal epithelium of ovary and 186 other cell types or tissues"/>
</dbReference>
<dbReference type="ExpressionAtlas" id="Q96IZ0">
    <property type="expression patterns" value="baseline and differential"/>
</dbReference>
<dbReference type="GO" id="GO:0015629">
    <property type="term" value="C:actin cytoskeleton"/>
    <property type="evidence" value="ECO:0000314"/>
    <property type="project" value="HPA"/>
</dbReference>
<dbReference type="GO" id="GO:0005884">
    <property type="term" value="C:actin filament"/>
    <property type="evidence" value="ECO:0000318"/>
    <property type="project" value="GO_Central"/>
</dbReference>
<dbReference type="GO" id="GO:0000785">
    <property type="term" value="C:chromatin"/>
    <property type="evidence" value="ECO:0007669"/>
    <property type="project" value="Ensembl"/>
</dbReference>
<dbReference type="GO" id="GO:0005737">
    <property type="term" value="C:cytoplasm"/>
    <property type="evidence" value="ECO:0000314"/>
    <property type="project" value="UniProtKB"/>
</dbReference>
<dbReference type="GO" id="GO:0005829">
    <property type="term" value="C:cytosol"/>
    <property type="evidence" value="ECO:0000314"/>
    <property type="project" value="HPA"/>
</dbReference>
<dbReference type="GO" id="GO:0043231">
    <property type="term" value="C:intracellular membrane-bounded organelle"/>
    <property type="evidence" value="ECO:0000314"/>
    <property type="project" value="HPA"/>
</dbReference>
<dbReference type="GO" id="GO:0005634">
    <property type="term" value="C:nucleus"/>
    <property type="evidence" value="ECO:0000314"/>
    <property type="project" value="UniProtKB"/>
</dbReference>
<dbReference type="GO" id="GO:0005886">
    <property type="term" value="C:plasma membrane"/>
    <property type="evidence" value="ECO:0000314"/>
    <property type="project" value="HPA"/>
</dbReference>
<dbReference type="GO" id="GO:0003779">
    <property type="term" value="F:actin binding"/>
    <property type="evidence" value="ECO:0000250"/>
    <property type="project" value="UniProtKB"/>
</dbReference>
<dbReference type="GO" id="GO:0019899">
    <property type="term" value="F:enzyme binding"/>
    <property type="evidence" value="ECO:0000314"/>
    <property type="project" value="UniProtKB"/>
</dbReference>
<dbReference type="GO" id="GO:0043522">
    <property type="term" value="F:leucine zipper domain binding"/>
    <property type="evidence" value="ECO:0000353"/>
    <property type="project" value="UniProtKB"/>
</dbReference>
<dbReference type="GO" id="GO:0003714">
    <property type="term" value="F:transcription corepressor activity"/>
    <property type="evidence" value="ECO:0000304"/>
    <property type="project" value="ProtInc"/>
</dbReference>
<dbReference type="GO" id="GO:0051017">
    <property type="term" value="P:actin filament bundle assembly"/>
    <property type="evidence" value="ECO:0000250"/>
    <property type="project" value="UniProtKB"/>
</dbReference>
<dbReference type="GO" id="GO:0006915">
    <property type="term" value="P:apoptotic process"/>
    <property type="evidence" value="ECO:0000250"/>
    <property type="project" value="UniProtKB"/>
</dbReference>
<dbReference type="GO" id="GO:0097190">
    <property type="term" value="P:apoptotic signaling pathway"/>
    <property type="evidence" value="ECO:0007669"/>
    <property type="project" value="Ensembl"/>
</dbReference>
<dbReference type="GO" id="GO:0030889">
    <property type="term" value="P:negative regulation of B cell proliferation"/>
    <property type="evidence" value="ECO:0007669"/>
    <property type="project" value="Ensembl"/>
</dbReference>
<dbReference type="GO" id="GO:0048147">
    <property type="term" value="P:negative regulation of fibroblast proliferation"/>
    <property type="evidence" value="ECO:0007669"/>
    <property type="project" value="Ensembl"/>
</dbReference>
<dbReference type="GO" id="GO:0010629">
    <property type="term" value="P:negative regulation of gene expression"/>
    <property type="evidence" value="ECO:0007669"/>
    <property type="project" value="Ensembl"/>
</dbReference>
<dbReference type="GO" id="GO:0042130">
    <property type="term" value="P:negative regulation of T cell proliferation"/>
    <property type="evidence" value="ECO:0007669"/>
    <property type="project" value="Ensembl"/>
</dbReference>
<dbReference type="GO" id="GO:0050860">
    <property type="term" value="P:negative regulation of T cell receptor signaling pathway"/>
    <property type="evidence" value="ECO:0007669"/>
    <property type="project" value="Ensembl"/>
</dbReference>
<dbReference type="GO" id="GO:0000122">
    <property type="term" value="P:negative regulation of transcription by RNA polymerase II"/>
    <property type="evidence" value="ECO:0000304"/>
    <property type="project" value="ProtInc"/>
</dbReference>
<dbReference type="GO" id="GO:0042986">
    <property type="term" value="P:positive regulation of amyloid precursor protein biosynthetic process"/>
    <property type="evidence" value="ECO:0007669"/>
    <property type="project" value="Ensembl"/>
</dbReference>
<dbReference type="GO" id="GO:0043065">
    <property type="term" value="P:positive regulation of apoptotic process"/>
    <property type="evidence" value="ECO:0000318"/>
    <property type="project" value="GO_Central"/>
</dbReference>
<dbReference type="GO" id="GO:2000774">
    <property type="term" value="P:positive regulation of cellular senescence"/>
    <property type="evidence" value="ECO:0007669"/>
    <property type="project" value="Ensembl"/>
</dbReference>
<dbReference type="GO" id="GO:0010628">
    <property type="term" value="P:positive regulation of gene expression"/>
    <property type="evidence" value="ECO:0007669"/>
    <property type="project" value="Ensembl"/>
</dbReference>
<dbReference type="GO" id="GO:1901300">
    <property type="term" value="P:positive regulation of hydrogen peroxide-mediated programmed cell death"/>
    <property type="evidence" value="ECO:0007669"/>
    <property type="project" value="Ensembl"/>
</dbReference>
<dbReference type="DisProt" id="DP01603"/>
<dbReference type="IDEAL" id="IID00177"/>
<dbReference type="InterPro" id="IPR026117">
    <property type="entry name" value="Par-4"/>
</dbReference>
<dbReference type="PANTHER" id="PTHR15093:SF1">
    <property type="entry name" value="PRKC APOPTOSIS WT1 REGULATOR PROTEIN"/>
    <property type="match status" value="1"/>
</dbReference>
<dbReference type="PANTHER" id="PTHR15093">
    <property type="entry name" value="PROSTATE APOPTOSIS RESPONSE PROTEIN PAR-4"/>
    <property type="match status" value="1"/>
</dbReference>